<protein>
    <recommendedName>
        <fullName evidence="1">Urease subunit gamma</fullName>
        <ecNumber evidence="1">3.5.1.5</ecNumber>
    </recommendedName>
    <alternativeName>
        <fullName evidence="1">Urea amidohydrolase subunit gamma</fullName>
    </alternativeName>
</protein>
<evidence type="ECO:0000255" key="1">
    <source>
        <dbReference type="HAMAP-Rule" id="MF_00739"/>
    </source>
</evidence>
<feature type="chain" id="PRO_1000199844" description="Urease subunit gamma">
    <location>
        <begin position="1"/>
        <end position="100"/>
    </location>
</feature>
<reference key="1">
    <citation type="journal article" date="2008" name="PLoS ONE">
        <title>Comparative analysis of Acinetobacters: three genomes for three lifestyles.</title>
        <authorList>
            <person name="Vallenet D."/>
            <person name="Nordmann P."/>
            <person name="Barbe V."/>
            <person name="Poirel L."/>
            <person name="Mangenot S."/>
            <person name="Bataille E."/>
            <person name="Dossat C."/>
            <person name="Gas S."/>
            <person name="Kreimeyer A."/>
            <person name="Lenoble P."/>
            <person name="Oztas S."/>
            <person name="Poulain J."/>
            <person name="Segurens B."/>
            <person name="Robert C."/>
            <person name="Abergel C."/>
            <person name="Claverie J.-M."/>
            <person name="Raoult D."/>
            <person name="Medigue C."/>
            <person name="Weissenbach J."/>
            <person name="Cruveiller S."/>
        </authorList>
    </citation>
    <scope>NUCLEOTIDE SEQUENCE [LARGE SCALE GENOMIC DNA]</scope>
    <source>
        <strain>AYE</strain>
    </source>
</reference>
<organism>
    <name type="scientific">Acinetobacter baumannii (strain AYE)</name>
    <dbReference type="NCBI Taxonomy" id="509173"/>
    <lineage>
        <taxon>Bacteria</taxon>
        <taxon>Pseudomonadati</taxon>
        <taxon>Pseudomonadota</taxon>
        <taxon>Gammaproteobacteria</taxon>
        <taxon>Moraxellales</taxon>
        <taxon>Moraxellaceae</taxon>
        <taxon>Acinetobacter</taxon>
        <taxon>Acinetobacter calcoaceticus/baumannii complex</taxon>
    </lineage>
</organism>
<accession>B0V9P7</accession>
<comment type="catalytic activity">
    <reaction evidence="1">
        <text>urea + 2 H2O + H(+) = hydrogencarbonate + 2 NH4(+)</text>
        <dbReference type="Rhea" id="RHEA:20557"/>
        <dbReference type="ChEBI" id="CHEBI:15377"/>
        <dbReference type="ChEBI" id="CHEBI:15378"/>
        <dbReference type="ChEBI" id="CHEBI:16199"/>
        <dbReference type="ChEBI" id="CHEBI:17544"/>
        <dbReference type="ChEBI" id="CHEBI:28938"/>
        <dbReference type="EC" id="3.5.1.5"/>
    </reaction>
</comment>
<comment type="pathway">
    <text evidence="1">Nitrogen metabolism; urea degradation; CO(2) and NH(3) from urea (urease route): step 1/1.</text>
</comment>
<comment type="subunit">
    <text evidence="1">Heterotrimer of UreA (gamma), UreB (beta) and UreC (alpha) subunits. Three heterotrimers associate to form the active enzyme.</text>
</comment>
<comment type="subcellular location">
    <subcellularLocation>
        <location evidence="1">Cytoplasm</location>
    </subcellularLocation>
</comment>
<comment type="similarity">
    <text evidence="1">Belongs to the urease gamma subunit family.</text>
</comment>
<name>URE3_ACIBY</name>
<gene>
    <name evidence="1" type="primary">ureA</name>
    <name type="ordered locus">ABAYE2778</name>
</gene>
<sequence length="100" mass="10968">MELNPTEKDKLLIFTAGLVAERRKARGLKLNYPEAVAFISAALLEGARDGMTVSELMHFGTTLLKREDVMDGVPEMIAEVQVEATFPDGSKLVTVHQPIV</sequence>
<dbReference type="EC" id="3.5.1.5" evidence="1"/>
<dbReference type="EMBL" id="CU459141">
    <property type="protein sequence ID" value="CAM87609.1"/>
    <property type="molecule type" value="Genomic_DNA"/>
</dbReference>
<dbReference type="RefSeq" id="WP_000422460.1">
    <property type="nucleotide sequence ID" value="NZ_JBDGFB010000015.1"/>
</dbReference>
<dbReference type="SMR" id="B0V9P7"/>
<dbReference type="EnsemblBacteria" id="CAM87609">
    <property type="protein sequence ID" value="CAM87609"/>
    <property type="gene ID" value="ABAYE2778"/>
</dbReference>
<dbReference type="GeneID" id="92892975"/>
<dbReference type="KEGG" id="aby:ABAYE2778"/>
<dbReference type="HOGENOM" id="CLU_145825_1_0_6"/>
<dbReference type="UniPathway" id="UPA00258">
    <property type="reaction ID" value="UER00370"/>
</dbReference>
<dbReference type="GO" id="GO:0005737">
    <property type="term" value="C:cytoplasm"/>
    <property type="evidence" value="ECO:0007669"/>
    <property type="project" value="UniProtKB-SubCell"/>
</dbReference>
<dbReference type="GO" id="GO:0016151">
    <property type="term" value="F:nickel cation binding"/>
    <property type="evidence" value="ECO:0007669"/>
    <property type="project" value="InterPro"/>
</dbReference>
<dbReference type="GO" id="GO:0009039">
    <property type="term" value="F:urease activity"/>
    <property type="evidence" value="ECO:0007669"/>
    <property type="project" value="UniProtKB-UniRule"/>
</dbReference>
<dbReference type="GO" id="GO:0043419">
    <property type="term" value="P:urea catabolic process"/>
    <property type="evidence" value="ECO:0007669"/>
    <property type="project" value="UniProtKB-UniRule"/>
</dbReference>
<dbReference type="CDD" id="cd00390">
    <property type="entry name" value="Urease_gamma"/>
    <property type="match status" value="1"/>
</dbReference>
<dbReference type="Gene3D" id="3.30.280.10">
    <property type="entry name" value="Urease, gamma-like subunit"/>
    <property type="match status" value="1"/>
</dbReference>
<dbReference type="HAMAP" id="MF_00739">
    <property type="entry name" value="Urease_gamma"/>
    <property type="match status" value="1"/>
</dbReference>
<dbReference type="InterPro" id="IPR012010">
    <property type="entry name" value="Urease_gamma"/>
</dbReference>
<dbReference type="InterPro" id="IPR002026">
    <property type="entry name" value="Urease_gamma/gamma-beta_su"/>
</dbReference>
<dbReference type="InterPro" id="IPR036463">
    <property type="entry name" value="Urease_gamma_sf"/>
</dbReference>
<dbReference type="InterPro" id="IPR050069">
    <property type="entry name" value="Urease_subunit"/>
</dbReference>
<dbReference type="NCBIfam" id="NF009712">
    <property type="entry name" value="PRK13241.1"/>
    <property type="match status" value="1"/>
</dbReference>
<dbReference type="NCBIfam" id="TIGR00193">
    <property type="entry name" value="urease_gam"/>
    <property type="match status" value="1"/>
</dbReference>
<dbReference type="PANTHER" id="PTHR33569">
    <property type="entry name" value="UREASE"/>
    <property type="match status" value="1"/>
</dbReference>
<dbReference type="PANTHER" id="PTHR33569:SF1">
    <property type="entry name" value="UREASE"/>
    <property type="match status" value="1"/>
</dbReference>
<dbReference type="Pfam" id="PF00547">
    <property type="entry name" value="Urease_gamma"/>
    <property type="match status" value="1"/>
</dbReference>
<dbReference type="PIRSF" id="PIRSF001223">
    <property type="entry name" value="Urease_gamma"/>
    <property type="match status" value="1"/>
</dbReference>
<dbReference type="SUPFAM" id="SSF54111">
    <property type="entry name" value="Urease, gamma-subunit"/>
    <property type="match status" value="1"/>
</dbReference>
<proteinExistence type="inferred from homology"/>
<keyword id="KW-0963">Cytoplasm</keyword>
<keyword id="KW-0378">Hydrolase</keyword>